<feature type="chain" id="PRO_0000361237" description="Putative S-adenosyl-L-methionine-dependent methyltransferase Rv1729c">
    <location>
        <begin position="1"/>
        <end position="312"/>
    </location>
</feature>
<feature type="binding site" evidence="1">
    <location>
        <position position="130"/>
    </location>
    <ligand>
        <name>S-adenosyl-L-methionine</name>
        <dbReference type="ChEBI" id="CHEBI:59789"/>
    </ligand>
</feature>
<feature type="binding site" evidence="1">
    <location>
        <begin position="159"/>
        <end position="160"/>
    </location>
    <ligand>
        <name>S-adenosyl-L-methionine</name>
        <dbReference type="ChEBI" id="CHEBI:59789"/>
    </ligand>
</feature>
<gene>
    <name type="ordered locus">Rv1729c</name>
</gene>
<reference key="1">
    <citation type="journal article" date="1998" name="Nature">
        <title>Deciphering the biology of Mycobacterium tuberculosis from the complete genome sequence.</title>
        <authorList>
            <person name="Cole S.T."/>
            <person name="Brosch R."/>
            <person name="Parkhill J."/>
            <person name="Garnier T."/>
            <person name="Churcher C.M."/>
            <person name="Harris D.E."/>
            <person name="Gordon S.V."/>
            <person name="Eiglmeier K."/>
            <person name="Gas S."/>
            <person name="Barry C.E. III"/>
            <person name="Tekaia F."/>
            <person name="Badcock K."/>
            <person name="Basham D."/>
            <person name="Brown D."/>
            <person name="Chillingworth T."/>
            <person name="Connor R."/>
            <person name="Davies R.M."/>
            <person name="Devlin K."/>
            <person name="Feltwell T."/>
            <person name="Gentles S."/>
            <person name="Hamlin N."/>
            <person name="Holroyd S."/>
            <person name="Hornsby T."/>
            <person name="Jagels K."/>
            <person name="Krogh A."/>
            <person name="McLean J."/>
            <person name="Moule S."/>
            <person name="Murphy L.D."/>
            <person name="Oliver S."/>
            <person name="Osborne J."/>
            <person name="Quail M.A."/>
            <person name="Rajandream M.A."/>
            <person name="Rogers J."/>
            <person name="Rutter S."/>
            <person name="Seeger K."/>
            <person name="Skelton S."/>
            <person name="Squares S."/>
            <person name="Squares R."/>
            <person name="Sulston J.E."/>
            <person name="Taylor K."/>
            <person name="Whitehead S."/>
            <person name="Barrell B.G."/>
        </authorList>
    </citation>
    <scope>NUCLEOTIDE SEQUENCE [LARGE SCALE GENOMIC DNA]</scope>
    <source>
        <strain>ATCC 25618 / H37Rv</strain>
    </source>
</reference>
<reference key="2">
    <citation type="journal article" date="2011" name="Mol. Cell. Proteomics">
        <title>Proteogenomic analysis of Mycobacterium tuberculosis by high resolution mass spectrometry.</title>
        <authorList>
            <person name="Kelkar D.S."/>
            <person name="Kumar D."/>
            <person name="Kumar P."/>
            <person name="Balakrishnan L."/>
            <person name="Muthusamy B."/>
            <person name="Yadav A.K."/>
            <person name="Shrivastava P."/>
            <person name="Marimuthu A."/>
            <person name="Anand S."/>
            <person name="Sundaram H."/>
            <person name="Kingsbury R."/>
            <person name="Harsha H.C."/>
            <person name="Nair B."/>
            <person name="Prasad T.S."/>
            <person name="Chauhan D.S."/>
            <person name="Katoch K."/>
            <person name="Katoch V.M."/>
            <person name="Kumar P."/>
            <person name="Chaerkady R."/>
            <person name="Ramachandran S."/>
            <person name="Dash D."/>
            <person name="Pandey A."/>
        </authorList>
    </citation>
    <scope>IDENTIFICATION BY MASS SPECTROMETRY [LARGE SCALE ANALYSIS]</scope>
    <source>
        <strain>ATCC 25618 / H37Rv</strain>
    </source>
</reference>
<name>Y1770_MYCTU</name>
<protein>
    <recommendedName>
        <fullName>Putative S-adenosyl-L-methionine-dependent methyltransferase Rv1729c</fullName>
        <ecNumber>2.1.1.-</ecNumber>
    </recommendedName>
</protein>
<comment type="function">
    <text evidence="1">Exhibits S-adenosyl-L-methionine-dependent methyltransferase activity.</text>
</comment>
<comment type="similarity">
    <text evidence="2">Belongs to the UPF0677 family.</text>
</comment>
<organism>
    <name type="scientific">Mycobacterium tuberculosis (strain ATCC 25618 / H37Rv)</name>
    <dbReference type="NCBI Taxonomy" id="83332"/>
    <lineage>
        <taxon>Bacteria</taxon>
        <taxon>Bacillati</taxon>
        <taxon>Actinomycetota</taxon>
        <taxon>Actinomycetes</taxon>
        <taxon>Mycobacteriales</taxon>
        <taxon>Mycobacteriaceae</taxon>
        <taxon>Mycobacterium</taxon>
        <taxon>Mycobacterium tuberculosis complex</taxon>
    </lineage>
</organism>
<proteinExistence type="evidence at protein level"/>
<accession>P9WFH9</accession>
<accession>L0T938</accession>
<accession>P71987</accession>
<accession>Q7D825</accession>
<dbReference type="EC" id="2.1.1.-"/>
<dbReference type="EMBL" id="AL123456">
    <property type="protein sequence ID" value="CCP44495.1"/>
    <property type="molecule type" value="Genomic_DNA"/>
</dbReference>
<dbReference type="PIR" id="D70687">
    <property type="entry name" value="D70687"/>
</dbReference>
<dbReference type="RefSeq" id="NP_216245.1">
    <property type="nucleotide sequence ID" value="NC_000962.3"/>
</dbReference>
<dbReference type="RefSeq" id="WP_003408497.1">
    <property type="nucleotide sequence ID" value="NZ_NVQJ01000010.1"/>
</dbReference>
<dbReference type="SMR" id="P9WFH9"/>
<dbReference type="STRING" id="83332.Rv1729c"/>
<dbReference type="PaxDb" id="83332-Rv1729c"/>
<dbReference type="DNASU" id="885194"/>
<dbReference type="GeneID" id="885194"/>
<dbReference type="KEGG" id="mtu:Rv1729c"/>
<dbReference type="KEGG" id="mtv:RVBD_1729c"/>
<dbReference type="TubercuList" id="Rv1729c"/>
<dbReference type="eggNOG" id="COG3315">
    <property type="taxonomic scope" value="Bacteria"/>
</dbReference>
<dbReference type="InParanoid" id="P9WFH9"/>
<dbReference type="OrthoDB" id="9806164at2"/>
<dbReference type="PhylomeDB" id="P9WFH9"/>
<dbReference type="Proteomes" id="UP000001584">
    <property type="component" value="Chromosome"/>
</dbReference>
<dbReference type="GO" id="GO:0005886">
    <property type="term" value="C:plasma membrane"/>
    <property type="evidence" value="ECO:0007005"/>
    <property type="project" value="MTBBASE"/>
</dbReference>
<dbReference type="GO" id="GO:0008168">
    <property type="term" value="F:methyltransferase activity"/>
    <property type="evidence" value="ECO:0007669"/>
    <property type="project" value="UniProtKB-KW"/>
</dbReference>
<dbReference type="GO" id="GO:0032259">
    <property type="term" value="P:methylation"/>
    <property type="evidence" value="ECO:0007669"/>
    <property type="project" value="UniProtKB-KW"/>
</dbReference>
<dbReference type="FunFam" id="3.40.50.150:FF:000152">
    <property type="entry name" value="S-adenosyl-L-methionine-dependent methyltransferase"/>
    <property type="match status" value="1"/>
</dbReference>
<dbReference type="Gene3D" id="3.40.50.150">
    <property type="entry name" value="Vaccinia Virus protein VP39"/>
    <property type="match status" value="1"/>
</dbReference>
<dbReference type="InterPro" id="IPR007213">
    <property type="entry name" value="Ppm1/Ppm2/Tcmp"/>
</dbReference>
<dbReference type="InterPro" id="IPR029063">
    <property type="entry name" value="SAM-dependent_MTases_sf"/>
</dbReference>
<dbReference type="InterPro" id="IPR011610">
    <property type="entry name" value="SAM_mthyl_Trfase_ML2640-like"/>
</dbReference>
<dbReference type="NCBIfam" id="TIGR00027">
    <property type="entry name" value="mthyl_TIGR00027"/>
    <property type="match status" value="1"/>
</dbReference>
<dbReference type="PANTHER" id="PTHR43619">
    <property type="entry name" value="S-ADENOSYL-L-METHIONINE-DEPENDENT METHYLTRANSFERASE YKTD-RELATED"/>
    <property type="match status" value="1"/>
</dbReference>
<dbReference type="PANTHER" id="PTHR43619:SF2">
    <property type="entry name" value="S-ADENOSYL-L-METHIONINE-DEPENDENT METHYLTRANSFERASES SUPERFAMILY PROTEIN"/>
    <property type="match status" value="1"/>
</dbReference>
<dbReference type="Pfam" id="PF04072">
    <property type="entry name" value="LCM"/>
    <property type="match status" value="1"/>
</dbReference>
<dbReference type="SUPFAM" id="SSF53335">
    <property type="entry name" value="S-adenosyl-L-methionine-dependent methyltransferases"/>
    <property type="match status" value="1"/>
</dbReference>
<keyword id="KW-0489">Methyltransferase</keyword>
<keyword id="KW-1185">Reference proteome</keyword>
<keyword id="KW-0949">S-adenosyl-L-methionine</keyword>
<keyword id="KW-0808">Transferase</keyword>
<sequence length="312" mass="33654">MARTDDDNWDLTSSVGVTATIVAVGRALATKDPRGLINDPFAEPLVRAVGLDLFTKMMDGELDMSTIADVSPAVAQAMVYGNAVRTKYFDDYLLNATAGGIRQVAILASGLDSRAYRLPWPTRTVVYEIDQPKVMEFKTTTLADLGAEPSAIRRAVPIDLRADWPTALQAAGFDSAAPTAWLAEGLLIYLKPQTQDRLFDNITALSAPGSMVATEFVTGIADFSAERARTISNPFRCHGVDVDLASLVYTGPRNHVLDYLAAKGWQPEGVSLAELFRRSGLDVRAADDDTIFISGCLTDHSSISPPTAAGWR</sequence>
<evidence type="ECO:0000250" key="1"/>
<evidence type="ECO:0000305" key="2"/>